<proteinExistence type="evidence at transcript level"/>
<evidence type="ECO:0000250" key="1"/>
<evidence type="ECO:0000255" key="2">
    <source>
        <dbReference type="PROSITE-ProRule" id="PRU00464"/>
    </source>
</evidence>
<comment type="subunit">
    <text evidence="1">Homodimer.</text>
</comment>
<name>ZB14_BRAJU</name>
<feature type="chain" id="PRO_0000109803" description="14 kDa zinc-binding protein">
    <location>
        <begin position="1" status="less than"/>
        <end position="113"/>
    </location>
</feature>
<feature type="domain" description="HIT" evidence="2">
    <location>
        <begin position="3"/>
        <end position="113"/>
    </location>
</feature>
<feature type="short sequence motif" description="Histidine triad motif" evidence="2">
    <location>
        <begin position="97"/>
        <end position="101"/>
    </location>
</feature>
<feature type="non-terminal residue">
    <location>
        <position position="1"/>
    </location>
</feature>
<accession>P42855</accession>
<dbReference type="EMBL" id="U09406">
    <property type="protein sequence ID" value="AAA18397.1"/>
    <property type="molecule type" value="mRNA"/>
</dbReference>
<dbReference type="SMR" id="P42855"/>
<dbReference type="GO" id="GO:0047627">
    <property type="term" value="F:adenylylsulfatase activity"/>
    <property type="evidence" value="ECO:0007669"/>
    <property type="project" value="UniProtKB-ARBA"/>
</dbReference>
<dbReference type="CDD" id="cd01276">
    <property type="entry name" value="PKCI_related"/>
    <property type="match status" value="1"/>
</dbReference>
<dbReference type="FunFam" id="3.30.428.10:FF:000005">
    <property type="entry name" value="Histidine triad nucleotide-binding protein 1"/>
    <property type="match status" value="1"/>
</dbReference>
<dbReference type="Gene3D" id="3.30.428.10">
    <property type="entry name" value="HIT-like"/>
    <property type="match status" value="1"/>
</dbReference>
<dbReference type="InterPro" id="IPR019808">
    <property type="entry name" value="Histidine_triad_CS"/>
</dbReference>
<dbReference type="InterPro" id="IPR001310">
    <property type="entry name" value="Histidine_triad_HIT"/>
</dbReference>
<dbReference type="InterPro" id="IPR011146">
    <property type="entry name" value="HIT-like"/>
</dbReference>
<dbReference type="InterPro" id="IPR036265">
    <property type="entry name" value="HIT-like_sf"/>
</dbReference>
<dbReference type="PANTHER" id="PTHR23089">
    <property type="entry name" value="HISTIDINE TRIAD HIT PROTEIN"/>
    <property type="match status" value="1"/>
</dbReference>
<dbReference type="Pfam" id="PF01230">
    <property type="entry name" value="HIT"/>
    <property type="match status" value="1"/>
</dbReference>
<dbReference type="PRINTS" id="PR00332">
    <property type="entry name" value="HISTRIAD"/>
</dbReference>
<dbReference type="SUPFAM" id="SSF54197">
    <property type="entry name" value="HIT-like"/>
    <property type="match status" value="1"/>
</dbReference>
<dbReference type="PROSITE" id="PS00892">
    <property type="entry name" value="HIT_1"/>
    <property type="match status" value="1"/>
</dbReference>
<dbReference type="PROSITE" id="PS51084">
    <property type="entry name" value="HIT_2"/>
    <property type="match status" value="1"/>
</dbReference>
<protein>
    <recommendedName>
        <fullName>14 kDa zinc-binding protein</fullName>
    </recommendedName>
    <alternativeName>
        <fullName>Protein kinase C inhibitor</fullName>
        <shortName>PKCI</shortName>
    </alternativeName>
</protein>
<reference key="1">
    <citation type="submission" date="1994-05" db="EMBL/GenBank/DDBJ databases">
        <authorList>
            <person name="Waller S.J."/>
            <person name="Murphy D."/>
        </authorList>
    </citation>
    <scope>NUCLEOTIDE SEQUENCE [MRNA]</scope>
</reference>
<sequence length="113" mass="12625">DTIFGKIISKEIPSTVVYEDDKVLAFRDITPQGPVHILLIPKVRDGLTGLFKAEERHIDILGRLLYTAKLVAKQEGLDEGFRIVINDGPQGCQSVYHIHVHLIGGRQMNWPPG</sequence>
<organism>
    <name type="scientific">Brassica juncea</name>
    <name type="common">Indian mustard</name>
    <name type="synonym">Sinapis juncea</name>
    <dbReference type="NCBI Taxonomy" id="3707"/>
    <lineage>
        <taxon>Eukaryota</taxon>
        <taxon>Viridiplantae</taxon>
        <taxon>Streptophyta</taxon>
        <taxon>Embryophyta</taxon>
        <taxon>Tracheophyta</taxon>
        <taxon>Spermatophyta</taxon>
        <taxon>Magnoliopsida</taxon>
        <taxon>eudicotyledons</taxon>
        <taxon>Gunneridae</taxon>
        <taxon>Pentapetalae</taxon>
        <taxon>rosids</taxon>
        <taxon>malvids</taxon>
        <taxon>Brassicales</taxon>
        <taxon>Brassicaceae</taxon>
        <taxon>Brassiceae</taxon>
        <taxon>Brassica</taxon>
    </lineage>
</organism>